<name>RS202_ARATH</name>
<reference key="1">
    <citation type="journal article" date="2000" name="Nature">
        <title>Sequence and analysis of chromosome 3 of the plant Arabidopsis thaliana.</title>
        <authorList>
            <person name="Salanoubat M."/>
            <person name="Lemcke K."/>
            <person name="Rieger M."/>
            <person name="Ansorge W."/>
            <person name="Unseld M."/>
            <person name="Fartmann B."/>
            <person name="Valle G."/>
            <person name="Bloecker H."/>
            <person name="Perez-Alonso M."/>
            <person name="Obermaier B."/>
            <person name="Delseny M."/>
            <person name="Boutry M."/>
            <person name="Grivell L.A."/>
            <person name="Mache R."/>
            <person name="Puigdomenech P."/>
            <person name="De Simone V."/>
            <person name="Choisne N."/>
            <person name="Artiguenave F."/>
            <person name="Robert C."/>
            <person name="Brottier P."/>
            <person name="Wincker P."/>
            <person name="Cattolico L."/>
            <person name="Weissenbach J."/>
            <person name="Saurin W."/>
            <person name="Quetier F."/>
            <person name="Schaefer M."/>
            <person name="Mueller-Auer S."/>
            <person name="Gabel C."/>
            <person name="Fuchs M."/>
            <person name="Benes V."/>
            <person name="Wurmbach E."/>
            <person name="Drzonek H."/>
            <person name="Erfle H."/>
            <person name="Jordan N."/>
            <person name="Bangert S."/>
            <person name="Wiedelmann R."/>
            <person name="Kranz H."/>
            <person name="Voss H."/>
            <person name="Holland R."/>
            <person name="Brandt P."/>
            <person name="Nyakatura G."/>
            <person name="Vezzi A."/>
            <person name="D'Angelo M."/>
            <person name="Pallavicini A."/>
            <person name="Toppo S."/>
            <person name="Simionati B."/>
            <person name="Conrad A."/>
            <person name="Hornischer K."/>
            <person name="Kauer G."/>
            <person name="Loehnert T.-H."/>
            <person name="Nordsiek G."/>
            <person name="Reichelt J."/>
            <person name="Scharfe M."/>
            <person name="Schoen O."/>
            <person name="Bargues M."/>
            <person name="Terol J."/>
            <person name="Climent J."/>
            <person name="Navarro P."/>
            <person name="Collado C."/>
            <person name="Perez-Perez A."/>
            <person name="Ottenwaelder B."/>
            <person name="Duchemin D."/>
            <person name="Cooke R."/>
            <person name="Laudie M."/>
            <person name="Berger-Llauro C."/>
            <person name="Purnelle B."/>
            <person name="Masuy D."/>
            <person name="de Haan M."/>
            <person name="Maarse A.C."/>
            <person name="Alcaraz J.-P."/>
            <person name="Cottet A."/>
            <person name="Casacuberta E."/>
            <person name="Monfort A."/>
            <person name="Argiriou A."/>
            <person name="Flores M."/>
            <person name="Liguori R."/>
            <person name="Vitale D."/>
            <person name="Mannhaupt G."/>
            <person name="Haase D."/>
            <person name="Schoof H."/>
            <person name="Rudd S."/>
            <person name="Zaccaria P."/>
            <person name="Mewes H.-W."/>
            <person name="Mayer K.F.X."/>
            <person name="Kaul S."/>
            <person name="Town C.D."/>
            <person name="Koo H.L."/>
            <person name="Tallon L.J."/>
            <person name="Jenkins J."/>
            <person name="Rooney T."/>
            <person name="Rizzo M."/>
            <person name="Walts A."/>
            <person name="Utterback T."/>
            <person name="Fujii C.Y."/>
            <person name="Shea T.P."/>
            <person name="Creasy T.H."/>
            <person name="Haas B."/>
            <person name="Maiti R."/>
            <person name="Wu D."/>
            <person name="Peterson J."/>
            <person name="Van Aken S."/>
            <person name="Pai G."/>
            <person name="Militscher J."/>
            <person name="Sellers P."/>
            <person name="Gill J.E."/>
            <person name="Feldblyum T.V."/>
            <person name="Preuss D."/>
            <person name="Lin X."/>
            <person name="Nierman W.C."/>
            <person name="Salzberg S.L."/>
            <person name="White O."/>
            <person name="Venter J.C."/>
            <person name="Fraser C.M."/>
            <person name="Kaneko T."/>
            <person name="Nakamura Y."/>
            <person name="Sato S."/>
            <person name="Kato T."/>
            <person name="Asamizu E."/>
            <person name="Sasamoto S."/>
            <person name="Kimura T."/>
            <person name="Idesawa K."/>
            <person name="Kawashima K."/>
            <person name="Kishida Y."/>
            <person name="Kiyokawa C."/>
            <person name="Kohara M."/>
            <person name="Matsumoto M."/>
            <person name="Matsuno A."/>
            <person name="Muraki A."/>
            <person name="Nakayama S."/>
            <person name="Nakazaki N."/>
            <person name="Shinpo S."/>
            <person name="Takeuchi C."/>
            <person name="Wada T."/>
            <person name="Watanabe A."/>
            <person name="Yamada M."/>
            <person name="Yasuda M."/>
            <person name="Tabata S."/>
        </authorList>
    </citation>
    <scope>NUCLEOTIDE SEQUENCE [LARGE SCALE GENOMIC DNA]</scope>
    <source>
        <strain>cv. Columbia</strain>
    </source>
</reference>
<reference key="2">
    <citation type="journal article" date="2017" name="Plant J.">
        <title>Araport11: a complete reannotation of the Arabidopsis thaliana reference genome.</title>
        <authorList>
            <person name="Cheng C.Y."/>
            <person name="Krishnakumar V."/>
            <person name="Chan A.P."/>
            <person name="Thibaud-Nissen F."/>
            <person name="Schobel S."/>
            <person name="Town C.D."/>
        </authorList>
    </citation>
    <scope>GENOME REANNOTATION</scope>
    <source>
        <strain>cv. Columbia</strain>
    </source>
</reference>
<reference key="3">
    <citation type="journal article" date="2003" name="Science">
        <title>Empirical analysis of transcriptional activity in the Arabidopsis genome.</title>
        <authorList>
            <person name="Yamada K."/>
            <person name="Lim J."/>
            <person name="Dale J.M."/>
            <person name="Chen H."/>
            <person name="Shinn P."/>
            <person name="Palm C.J."/>
            <person name="Southwick A.M."/>
            <person name="Wu H.C."/>
            <person name="Kim C.J."/>
            <person name="Nguyen M."/>
            <person name="Pham P.K."/>
            <person name="Cheuk R.F."/>
            <person name="Karlin-Newmann G."/>
            <person name="Liu S.X."/>
            <person name="Lam B."/>
            <person name="Sakano H."/>
            <person name="Wu T."/>
            <person name="Yu G."/>
            <person name="Miranda M."/>
            <person name="Quach H.L."/>
            <person name="Tripp M."/>
            <person name="Chang C.H."/>
            <person name="Lee J.M."/>
            <person name="Toriumi M.J."/>
            <person name="Chan M.M."/>
            <person name="Tang C.C."/>
            <person name="Onodera C.S."/>
            <person name="Deng J.M."/>
            <person name="Akiyama K."/>
            <person name="Ansari Y."/>
            <person name="Arakawa T."/>
            <person name="Banh J."/>
            <person name="Banno F."/>
            <person name="Bowser L."/>
            <person name="Brooks S.Y."/>
            <person name="Carninci P."/>
            <person name="Chao Q."/>
            <person name="Choy N."/>
            <person name="Enju A."/>
            <person name="Goldsmith A.D."/>
            <person name="Gurjal M."/>
            <person name="Hansen N.F."/>
            <person name="Hayashizaki Y."/>
            <person name="Johnson-Hopson C."/>
            <person name="Hsuan V.W."/>
            <person name="Iida K."/>
            <person name="Karnes M."/>
            <person name="Khan S."/>
            <person name="Koesema E."/>
            <person name="Ishida J."/>
            <person name="Jiang P.X."/>
            <person name="Jones T."/>
            <person name="Kawai J."/>
            <person name="Kamiya A."/>
            <person name="Meyers C."/>
            <person name="Nakajima M."/>
            <person name="Narusaka M."/>
            <person name="Seki M."/>
            <person name="Sakurai T."/>
            <person name="Satou M."/>
            <person name="Tamse R."/>
            <person name="Vaysberg M."/>
            <person name="Wallender E.K."/>
            <person name="Wong C."/>
            <person name="Yamamura Y."/>
            <person name="Yuan S."/>
            <person name="Shinozaki K."/>
            <person name="Davis R.W."/>
            <person name="Theologis A."/>
            <person name="Ecker J.R."/>
        </authorList>
    </citation>
    <scope>NUCLEOTIDE SEQUENCE [LARGE SCALE MRNA]</scope>
    <source>
        <strain>cv. Columbia</strain>
    </source>
</reference>
<reference key="4">
    <citation type="submission" date="2006-07" db="EMBL/GenBank/DDBJ databases">
        <title>Large-scale analysis of RIKEN Arabidopsis full-length (RAFL) cDNAs.</title>
        <authorList>
            <person name="Totoki Y."/>
            <person name="Seki M."/>
            <person name="Ishida J."/>
            <person name="Nakajima M."/>
            <person name="Enju A."/>
            <person name="Kamiya A."/>
            <person name="Narusaka M."/>
            <person name="Shin-i T."/>
            <person name="Nakagawa M."/>
            <person name="Sakamoto N."/>
            <person name="Oishi K."/>
            <person name="Kohara Y."/>
            <person name="Kobayashi M."/>
            <person name="Toyoda A."/>
            <person name="Sakaki Y."/>
            <person name="Sakurai T."/>
            <person name="Iida K."/>
            <person name="Akiyama K."/>
            <person name="Satou M."/>
            <person name="Toyoda T."/>
            <person name="Konagaya A."/>
            <person name="Carninci P."/>
            <person name="Kawai J."/>
            <person name="Hayashizaki Y."/>
            <person name="Shinozaki K."/>
        </authorList>
    </citation>
    <scope>NUCLEOTIDE SEQUENCE [LARGE SCALE MRNA]</scope>
    <source>
        <strain>cv. Columbia</strain>
    </source>
</reference>
<reference key="5">
    <citation type="submission" date="2002-03" db="EMBL/GenBank/DDBJ databases">
        <title>Full-length cDNA from Arabidopsis thaliana.</title>
        <authorList>
            <person name="Brover V.V."/>
            <person name="Troukhan M.E."/>
            <person name="Alexandrov N.A."/>
            <person name="Lu Y.-P."/>
            <person name="Flavell R.B."/>
            <person name="Feldmann K.A."/>
        </authorList>
    </citation>
    <scope>NUCLEOTIDE SEQUENCE [LARGE SCALE MRNA]</scope>
</reference>
<reference key="6">
    <citation type="journal article" date="2001" name="Plant Physiol.">
        <title>The organization of cytoplasmic ribosomal protein genes in the Arabidopsis genome.</title>
        <authorList>
            <person name="Barakat A."/>
            <person name="Szick-Miranda K."/>
            <person name="Chang I.-F."/>
            <person name="Guyot R."/>
            <person name="Blanc G."/>
            <person name="Cooke R."/>
            <person name="Delseny M."/>
            <person name="Bailey-Serres J."/>
        </authorList>
    </citation>
    <scope>GENE FAMILY ORGANIZATION</scope>
    <scope>NOMENCLATURE</scope>
</reference>
<reference key="7">
    <citation type="journal article" date="2023" name="Plant Cell">
        <title>An updated nomenclature for plant ribosomal protein genes.</title>
        <authorList>
            <person name="Scarpin M.R."/>
            <person name="Busche M."/>
            <person name="Martinez R.E."/>
            <person name="Harper L.C."/>
            <person name="Reiser L."/>
            <person name="Szakonyi D."/>
            <person name="Merchante C."/>
            <person name="Lan T."/>
            <person name="Xiong W."/>
            <person name="Mo B."/>
            <person name="Tang G."/>
            <person name="Chen X."/>
            <person name="Bailey-Serres J."/>
            <person name="Browning K.S."/>
            <person name="Brunkard J.O."/>
        </authorList>
    </citation>
    <scope>NOMENCLATURE</scope>
</reference>
<keyword id="KW-1185">Reference proteome</keyword>
<keyword id="KW-0687">Ribonucleoprotein</keyword>
<keyword id="KW-0689">Ribosomal protein</keyword>
<feature type="chain" id="PRO_0000250173" description="Small ribosomal subunit protein uS10y">
    <location>
        <begin position="1"/>
        <end position="122"/>
    </location>
</feature>
<sequence>MAYEPMKPTKAGLEAPLEQIHKIRITLSSKNVKNLEKVCTDLVRGAKDKRLRVKGPVRMPTKVLKITTRKAPCGEGTNTWDRFELRVHKRVIDLFSSPDVVKQITSITIEPGVEVEVTIADS</sequence>
<accession>Q9STY6</accession>
<dbReference type="EMBL" id="AL096860">
    <property type="protein sequence ID" value="CAB51209.1"/>
    <property type="molecule type" value="Genomic_DNA"/>
</dbReference>
<dbReference type="EMBL" id="CP002686">
    <property type="protein sequence ID" value="AEE78271.1"/>
    <property type="molecule type" value="Genomic_DNA"/>
</dbReference>
<dbReference type="EMBL" id="CP002686">
    <property type="protein sequence ID" value="AEE78272.1"/>
    <property type="molecule type" value="Genomic_DNA"/>
</dbReference>
<dbReference type="EMBL" id="CP002686">
    <property type="protein sequence ID" value="AEE78273.1"/>
    <property type="molecule type" value="Genomic_DNA"/>
</dbReference>
<dbReference type="EMBL" id="BT003067">
    <property type="protein sequence ID" value="AAO23632.1"/>
    <property type="molecule type" value="mRNA"/>
</dbReference>
<dbReference type="EMBL" id="AK227448">
    <property type="protein sequence ID" value="BAE99451.1"/>
    <property type="molecule type" value="mRNA"/>
</dbReference>
<dbReference type="EMBL" id="AK227766">
    <property type="protein sequence ID" value="BAE99749.1"/>
    <property type="molecule type" value="mRNA"/>
</dbReference>
<dbReference type="EMBL" id="AY088633">
    <property type="protein sequence ID" value="AAM66955.1"/>
    <property type="molecule type" value="mRNA"/>
</dbReference>
<dbReference type="PIR" id="T12992">
    <property type="entry name" value="T12992"/>
</dbReference>
<dbReference type="RefSeq" id="NP_001030826.1">
    <property type="nucleotide sequence ID" value="NM_001035749.3"/>
</dbReference>
<dbReference type="RefSeq" id="NP_190321.1">
    <property type="nucleotide sequence ID" value="NM_114605.3"/>
</dbReference>
<dbReference type="RefSeq" id="NP_850665.1">
    <property type="nucleotide sequence ID" value="NM_180334.2"/>
</dbReference>
<dbReference type="SMR" id="Q9STY6"/>
<dbReference type="BioGRID" id="9211">
    <property type="interactions" value="12"/>
</dbReference>
<dbReference type="FunCoup" id="Q9STY6">
    <property type="interactions" value="2686"/>
</dbReference>
<dbReference type="STRING" id="3702.Q9STY6"/>
<dbReference type="PaxDb" id="3702-AT3G47370.1"/>
<dbReference type="ProteomicsDB" id="226881"/>
<dbReference type="EnsemblPlants" id="AT3G47370.1">
    <property type="protein sequence ID" value="AT3G47370.1"/>
    <property type="gene ID" value="AT3G47370"/>
</dbReference>
<dbReference type="EnsemblPlants" id="AT3G47370.2">
    <property type="protein sequence ID" value="AT3G47370.2"/>
    <property type="gene ID" value="AT3G47370"/>
</dbReference>
<dbReference type="EnsemblPlants" id="AT3G47370.3">
    <property type="protein sequence ID" value="AT3G47370.3"/>
    <property type="gene ID" value="AT3G47370"/>
</dbReference>
<dbReference type="GeneID" id="823891"/>
<dbReference type="Gramene" id="AT3G47370.1">
    <property type="protein sequence ID" value="AT3G47370.1"/>
    <property type="gene ID" value="AT3G47370"/>
</dbReference>
<dbReference type="Gramene" id="AT3G47370.2">
    <property type="protein sequence ID" value="AT3G47370.2"/>
    <property type="gene ID" value="AT3G47370"/>
</dbReference>
<dbReference type="Gramene" id="AT3G47370.3">
    <property type="protein sequence ID" value="AT3G47370.3"/>
    <property type="gene ID" value="AT3G47370"/>
</dbReference>
<dbReference type="KEGG" id="ath:AT3G47370"/>
<dbReference type="Araport" id="AT3G47370"/>
<dbReference type="TAIR" id="AT3G47370"/>
<dbReference type="eggNOG" id="KOG0900">
    <property type="taxonomic scope" value="Eukaryota"/>
</dbReference>
<dbReference type="HOGENOM" id="CLU_122625_0_0_1"/>
<dbReference type="InParanoid" id="Q9STY6"/>
<dbReference type="OMA" id="MAYPMKP"/>
<dbReference type="OrthoDB" id="588367at2759"/>
<dbReference type="PhylomeDB" id="Q9STY6"/>
<dbReference type="CD-CODE" id="4299E36E">
    <property type="entry name" value="Nucleolus"/>
</dbReference>
<dbReference type="PRO" id="PR:Q9STY6"/>
<dbReference type="Proteomes" id="UP000006548">
    <property type="component" value="Chromosome 3"/>
</dbReference>
<dbReference type="ExpressionAtlas" id="Q9STY6">
    <property type="expression patterns" value="baseline and differential"/>
</dbReference>
<dbReference type="GO" id="GO:0005829">
    <property type="term" value="C:cytosol"/>
    <property type="evidence" value="ECO:0007005"/>
    <property type="project" value="TAIR"/>
</dbReference>
<dbReference type="GO" id="GO:0022626">
    <property type="term" value="C:cytosolic ribosome"/>
    <property type="evidence" value="ECO:0007005"/>
    <property type="project" value="TAIR"/>
</dbReference>
<dbReference type="GO" id="GO:0022627">
    <property type="term" value="C:cytosolic small ribosomal subunit"/>
    <property type="evidence" value="ECO:0007005"/>
    <property type="project" value="TAIR"/>
</dbReference>
<dbReference type="GO" id="GO:0005730">
    <property type="term" value="C:nucleolus"/>
    <property type="evidence" value="ECO:0007005"/>
    <property type="project" value="TAIR"/>
</dbReference>
<dbReference type="GO" id="GO:0009505">
    <property type="term" value="C:plant-type cell wall"/>
    <property type="evidence" value="ECO:0007005"/>
    <property type="project" value="TAIR"/>
</dbReference>
<dbReference type="GO" id="GO:0009506">
    <property type="term" value="C:plasmodesma"/>
    <property type="evidence" value="ECO:0007005"/>
    <property type="project" value="TAIR"/>
</dbReference>
<dbReference type="GO" id="GO:0003729">
    <property type="term" value="F:mRNA binding"/>
    <property type="evidence" value="ECO:0000314"/>
    <property type="project" value="TAIR"/>
</dbReference>
<dbReference type="GO" id="GO:0003735">
    <property type="term" value="F:structural constituent of ribosome"/>
    <property type="evidence" value="ECO:0000314"/>
    <property type="project" value="CAFA"/>
</dbReference>
<dbReference type="GO" id="GO:0006412">
    <property type="term" value="P:translation"/>
    <property type="evidence" value="ECO:0007669"/>
    <property type="project" value="InterPro"/>
</dbReference>
<dbReference type="FunFam" id="3.30.70.600:FF:000002">
    <property type="entry name" value="40S ribosomal protein S20"/>
    <property type="match status" value="1"/>
</dbReference>
<dbReference type="Gene3D" id="3.30.70.600">
    <property type="entry name" value="Ribosomal protein S10 domain"/>
    <property type="match status" value="1"/>
</dbReference>
<dbReference type="HAMAP" id="MF_00508">
    <property type="entry name" value="Ribosomal_uS10"/>
    <property type="match status" value="1"/>
</dbReference>
<dbReference type="InterPro" id="IPR001848">
    <property type="entry name" value="Ribosomal_uS10"/>
</dbReference>
<dbReference type="InterPro" id="IPR018268">
    <property type="entry name" value="Ribosomal_uS10_CS"/>
</dbReference>
<dbReference type="InterPro" id="IPR027486">
    <property type="entry name" value="Ribosomal_uS10_dom"/>
</dbReference>
<dbReference type="InterPro" id="IPR036838">
    <property type="entry name" value="Ribosomal_uS10_dom_sf"/>
</dbReference>
<dbReference type="InterPro" id="IPR005729">
    <property type="entry name" value="Ribosomal_uS10_euk/arc"/>
</dbReference>
<dbReference type="NCBIfam" id="TIGR01046">
    <property type="entry name" value="uS10_euk_arch"/>
    <property type="match status" value="1"/>
</dbReference>
<dbReference type="PANTHER" id="PTHR11700">
    <property type="entry name" value="30S RIBOSOMAL PROTEIN S10 FAMILY MEMBER"/>
    <property type="match status" value="1"/>
</dbReference>
<dbReference type="Pfam" id="PF00338">
    <property type="entry name" value="Ribosomal_S10"/>
    <property type="match status" value="1"/>
</dbReference>
<dbReference type="PRINTS" id="PR00971">
    <property type="entry name" value="RIBOSOMALS10"/>
</dbReference>
<dbReference type="SMART" id="SM01403">
    <property type="entry name" value="Ribosomal_S10"/>
    <property type="match status" value="1"/>
</dbReference>
<dbReference type="SUPFAM" id="SSF54999">
    <property type="entry name" value="Ribosomal protein S10"/>
    <property type="match status" value="1"/>
</dbReference>
<dbReference type="PROSITE" id="PS00361">
    <property type="entry name" value="RIBOSOMAL_S10"/>
    <property type="match status" value="1"/>
</dbReference>
<protein>
    <recommendedName>
        <fullName evidence="1">Small ribosomal subunit protein uS10y</fullName>
    </recommendedName>
    <alternativeName>
        <fullName>40S ribosomal protein S20-2</fullName>
    </alternativeName>
</protein>
<proteinExistence type="evidence at transcript level"/>
<organism>
    <name type="scientific">Arabidopsis thaliana</name>
    <name type="common">Mouse-ear cress</name>
    <dbReference type="NCBI Taxonomy" id="3702"/>
    <lineage>
        <taxon>Eukaryota</taxon>
        <taxon>Viridiplantae</taxon>
        <taxon>Streptophyta</taxon>
        <taxon>Embryophyta</taxon>
        <taxon>Tracheophyta</taxon>
        <taxon>Spermatophyta</taxon>
        <taxon>Magnoliopsida</taxon>
        <taxon>eudicotyledons</taxon>
        <taxon>Gunneridae</taxon>
        <taxon>Pentapetalae</taxon>
        <taxon>rosids</taxon>
        <taxon>malvids</taxon>
        <taxon>Brassicales</taxon>
        <taxon>Brassicaceae</taxon>
        <taxon>Camelineae</taxon>
        <taxon>Arabidopsis</taxon>
    </lineage>
</organism>
<evidence type="ECO:0000303" key="1">
    <source>
    </source>
</evidence>
<evidence type="ECO:0000305" key="2"/>
<gene>
    <name type="primary">RPS20B</name>
    <name type="ordered locus">At3g47370</name>
    <name type="ORF">T21L8.120</name>
</gene>
<comment type="similarity">
    <text evidence="2">Belongs to the universal ribosomal protein uS10 family.</text>
</comment>